<reference key="1">
    <citation type="journal article" date="2005" name="Proc. Natl. Acad. Sci. U.S.A.">
        <title>The psychrophilic lifestyle as revealed by the genome sequence of Colwellia psychrerythraea 34H through genomic and proteomic analyses.</title>
        <authorList>
            <person name="Methe B.A."/>
            <person name="Nelson K.E."/>
            <person name="Deming J.W."/>
            <person name="Momen B."/>
            <person name="Melamud E."/>
            <person name="Zhang X."/>
            <person name="Moult J."/>
            <person name="Madupu R."/>
            <person name="Nelson W.C."/>
            <person name="Dodson R.J."/>
            <person name="Brinkac L.M."/>
            <person name="Daugherty S.C."/>
            <person name="Durkin A.S."/>
            <person name="DeBoy R.T."/>
            <person name="Kolonay J.F."/>
            <person name="Sullivan S.A."/>
            <person name="Zhou L."/>
            <person name="Davidsen T.M."/>
            <person name="Wu M."/>
            <person name="Huston A.L."/>
            <person name="Lewis M."/>
            <person name="Weaver B."/>
            <person name="Weidman J.F."/>
            <person name="Khouri H."/>
            <person name="Utterback T.R."/>
            <person name="Feldblyum T.V."/>
            <person name="Fraser C.M."/>
        </authorList>
    </citation>
    <scope>NUCLEOTIDE SEQUENCE [LARGE SCALE GENOMIC DNA]</scope>
    <source>
        <strain>34H / ATCC BAA-681</strain>
    </source>
</reference>
<keyword id="KW-0687">Ribonucleoprotein</keyword>
<keyword id="KW-0689">Ribosomal protein</keyword>
<keyword id="KW-0694">RNA-binding</keyword>
<keyword id="KW-0699">rRNA-binding</keyword>
<accession>Q482T6</accession>
<gene>
    <name evidence="1" type="primary">rpsO</name>
    <name type="ordered locus">CPS_2206</name>
</gene>
<feature type="chain" id="PRO_0000115420" description="Small ribosomal subunit protein uS15">
    <location>
        <begin position="1"/>
        <end position="89"/>
    </location>
</feature>
<evidence type="ECO:0000255" key="1">
    <source>
        <dbReference type="HAMAP-Rule" id="MF_01343"/>
    </source>
</evidence>
<evidence type="ECO:0000305" key="2"/>
<organism>
    <name type="scientific">Colwellia psychrerythraea (strain 34H / ATCC BAA-681)</name>
    <name type="common">Vibrio psychroerythus</name>
    <dbReference type="NCBI Taxonomy" id="167879"/>
    <lineage>
        <taxon>Bacteria</taxon>
        <taxon>Pseudomonadati</taxon>
        <taxon>Pseudomonadota</taxon>
        <taxon>Gammaproteobacteria</taxon>
        <taxon>Alteromonadales</taxon>
        <taxon>Colwelliaceae</taxon>
        <taxon>Colwellia</taxon>
    </lineage>
</organism>
<comment type="function">
    <text evidence="1">One of the primary rRNA binding proteins, it binds directly to 16S rRNA where it helps nucleate assembly of the platform of the 30S subunit by binding and bridging several RNA helices of the 16S rRNA.</text>
</comment>
<comment type="function">
    <text evidence="1">Forms an intersubunit bridge (bridge B4) with the 23S rRNA of the 50S subunit in the ribosome.</text>
</comment>
<comment type="subunit">
    <text evidence="1">Part of the 30S ribosomal subunit. Forms a bridge to the 50S subunit in the 70S ribosome, contacting the 23S rRNA.</text>
</comment>
<comment type="similarity">
    <text evidence="1">Belongs to the universal ribosomal protein uS15 family.</text>
</comment>
<protein>
    <recommendedName>
        <fullName evidence="1">Small ribosomal subunit protein uS15</fullName>
    </recommendedName>
    <alternativeName>
        <fullName evidence="2">30S ribosomal protein S15</fullName>
    </alternativeName>
</protein>
<dbReference type="EMBL" id="CP000083">
    <property type="protein sequence ID" value="AAZ25653.1"/>
    <property type="molecule type" value="Genomic_DNA"/>
</dbReference>
<dbReference type="RefSeq" id="WP_011043025.1">
    <property type="nucleotide sequence ID" value="NC_003910.7"/>
</dbReference>
<dbReference type="SMR" id="Q482T6"/>
<dbReference type="STRING" id="167879.CPS_2206"/>
<dbReference type="KEGG" id="cps:CPS_2206"/>
<dbReference type="eggNOG" id="COG0184">
    <property type="taxonomic scope" value="Bacteria"/>
</dbReference>
<dbReference type="HOGENOM" id="CLU_148518_0_0_6"/>
<dbReference type="Proteomes" id="UP000000547">
    <property type="component" value="Chromosome"/>
</dbReference>
<dbReference type="GO" id="GO:0022627">
    <property type="term" value="C:cytosolic small ribosomal subunit"/>
    <property type="evidence" value="ECO:0007669"/>
    <property type="project" value="TreeGrafter"/>
</dbReference>
<dbReference type="GO" id="GO:0019843">
    <property type="term" value="F:rRNA binding"/>
    <property type="evidence" value="ECO:0007669"/>
    <property type="project" value="UniProtKB-UniRule"/>
</dbReference>
<dbReference type="GO" id="GO:0003735">
    <property type="term" value="F:structural constituent of ribosome"/>
    <property type="evidence" value="ECO:0007669"/>
    <property type="project" value="InterPro"/>
</dbReference>
<dbReference type="GO" id="GO:0006412">
    <property type="term" value="P:translation"/>
    <property type="evidence" value="ECO:0007669"/>
    <property type="project" value="UniProtKB-UniRule"/>
</dbReference>
<dbReference type="CDD" id="cd00353">
    <property type="entry name" value="Ribosomal_S15p_S13e"/>
    <property type="match status" value="1"/>
</dbReference>
<dbReference type="FunFam" id="1.10.287.10:FF:000002">
    <property type="entry name" value="30S ribosomal protein S15"/>
    <property type="match status" value="1"/>
</dbReference>
<dbReference type="Gene3D" id="6.10.250.3130">
    <property type="match status" value="1"/>
</dbReference>
<dbReference type="Gene3D" id="1.10.287.10">
    <property type="entry name" value="S15/NS1, RNA-binding"/>
    <property type="match status" value="1"/>
</dbReference>
<dbReference type="HAMAP" id="MF_01343_B">
    <property type="entry name" value="Ribosomal_uS15_B"/>
    <property type="match status" value="1"/>
</dbReference>
<dbReference type="InterPro" id="IPR000589">
    <property type="entry name" value="Ribosomal_uS15"/>
</dbReference>
<dbReference type="InterPro" id="IPR005290">
    <property type="entry name" value="Ribosomal_uS15_bac-type"/>
</dbReference>
<dbReference type="InterPro" id="IPR009068">
    <property type="entry name" value="uS15_NS1_RNA-bd_sf"/>
</dbReference>
<dbReference type="NCBIfam" id="TIGR00952">
    <property type="entry name" value="S15_bact"/>
    <property type="match status" value="1"/>
</dbReference>
<dbReference type="PANTHER" id="PTHR23321">
    <property type="entry name" value="RIBOSOMAL PROTEIN S15, BACTERIAL AND ORGANELLAR"/>
    <property type="match status" value="1"/>
</dbReference>
<dbReference type="PANTHER" id="PTHR23321:SF26">
    <property type="entry name" value="SMALL RIBOSOMAL SUBUNIT PROTEIN US15M"/>
    <property type="match status" value="1"/>
</dbReference>
<dbReference type="Pfam" id="PF00312">
    <property type="entry name" value="Ribosomal_S15"/>
    <property type="match status" value="1"/>
</dbReference>
<dbReference type="SMART" id="SM01387">
    <property type="entry name" value="Ribosomal_S15"/>
    <property type="match status" value="1"/>
</dbReference>
<dbReference type="SUPFAM" id="SSF47060">
    <property type="entry name" value="S15/NS1 RNA-binding domain"/>
    <property type="match status" value="1"/>
</dbReference>
<dbReference type="PROSITE" id="PS00362">
    <property type="entry name" value="RIBOSOMAL_S15"/>
    <property type="match status" value="1"/>
</dbReference>
<sequence>MSLNATEKAAIVAEYAQSEGDTGSPEVQVALLTTQINHLQGHFKAHIHDHHSRRGLLRMVAQRRKLLDYLKGKNVDRYGALIGKLGLRR</sequence>
<proteinExistence type="inferred from homology"/>
<name>RS15_COLP3</name>